<keyword id="KW-0414">Isoprene biosynthesis</keyword>
<keyword id="KW-0456">Lyase</keyword>
<keyword id="KW-0479">Metal-binding</keyword>
<keyword id="KW-1185">Reference proteome</keyword>
<comment type="function">
    <text evidence="1">Involved in the biosynthesis of isopentenyl diphosphate (IPP) and dimethylallyl diphosphate (DMAPP), two major building blocks of isoprenoid compounds. Catalyzes the conversion of 4-diphosphocytidyl-2-C-methyl-D-erythritol 2-phosphate (CDP-ME2P) to 2-C-methyl-D-erythritol 2,4-cyclodiphosphate (ME-CPP) with a corresponding release of cytidine 5-monophosphate (CMP).</text>
</comment>
<comment type="catalytic activity">
    <reaction evidence="1">
        <text>4-CDP-2-C-methyl-D-erythritol 2-phosphate = 2-C-methyl-D-erythritol 2,4-cyclic diphosphate + CMP</text>
        <dbReference type="Rhea" id="RHEA:23864"/>
        <dbReference type="ChEBI" id="CHEBI:57919"/>
        <dbReference type="ChEBI" id="CHEBI:58483"/>
        <dbReference type="ChEBI" id="CHEBI:60377"/>
        <dbReference type="EC" id="4.6.1.12"/>
    </reaction>
</comment>
<comment type="cofactor">
    <cofactor evidence="1">
        <name>a divalent metal cation</name>
        <dbReference type="ChEBI" id="CHEBI:60240"/>
    </cofactor>
    <text evidence="1">Binds 1 divalent metal cation per subunit.</text>
</comment>
<comment type="pathway">
    <text evidence="1">Isoprenoid biosynthesis; isopentenyl diphosphate biosynthesis via DXP pathway; isopentenyl diphosphate from 1-deoxy-D-xylulose 5-phosphate: step 4/6.</text>
</comment>
<comment type="subunit">
    <text evidence="1">Homotrimer.</text>
</comment>
<comment type="similarity">
    <text evidence="1">Belongs to the IspF family.</text>
</comment>
<dbReference type="EC" id="4.6.1.12" evidence="1"/>
<dbReference type="EMBL" id="CP000240">
    <property type="protein sequence ID" value="ABD01766.1"/>
    <property type="molecule type" value="Genomic_DNA"/>
</dbReference>
<dbReference type="RefSeq" id="WP_011429179.1">
    <property type="nucleotide sequence ID" value="NC_007776.1"/>
</dbReference>
<dbReference type="SMR" id="Q2JNA9"/>
<dbReference type="STRING" id="321332.CYB_0783"/>
<dbReference type="KEGG" id="cyb:CYB_0783"/>
<dbReference type="eggNOG" id="COG0245">
    <property type="taxonomic scope" value="Bacteria"/>
</dbReference>
<dbReference type="HOGENOM" id="CLU_084630_2_0_3"/>
<dbReference type="OrthoDB" id="9804336at2"/>
<dbReference type="UniPathway" id="UPA00056">
    <property type="reaction ID" value="UER00095"/>
</dbReference>
<dbReference type="Proteomes" id="UP000001938">
    <property type="component" value="Chromosome"/>
</dbReference>
<dbReference type="GO" id="GO:0008685">
    <property type="term" value="F:2-C-methyl-D-erythritol 2,4-cyclodiphosphate synthase activity"/>
    <property type="evidence" value="ECO:0007669"/>
    <property type="project" value="UniProtKB-UniRule"/>
</dbReference>
<dbReference type="GO" id="GO:0046872">
    <property type="term" value="F:metal ion binding"/>
    <property type="evidence" value="ECO:0007669"/>
    <property type="project" value="UniProtKB-KW"/>
</dbReference>
<dbReference type="GO" id="GO:0019288">
    <property type="term" value="P:isopentenyl diphosphate biosynthetic process, methylerythritol 4-phosphate pathway"/>
    <property type="evidence" value="ECO:0007669"/>
    <property type="project" value="UniProtKB-UniRule"/>
</dbReference>
<dbReference type="GO" id="GO:0016114">
    <property type="term" value="P:terpenoid biosynthetic process"/>
    <property type="evidence" value="ECO:0007669"/>
    <property type="project" value="InterPro"/>
</dbReference>
<dbReference type="CDD" id="cd00554">
    <property type="entry name" value="MECDP_synthase"/>
    <property type="match status" value="1"/>
</dbReference>
<dbReference type="FunFam" id="3.30.1330.50:FF:000001">
    <property type="entry name" value="2-C-methyl-D-erythritol 2,4-cyclodiphosphate synthase"/>
    <property type="match status" value="1"/>
</dbReference>
<dbReference type="Gene3D" id="3.30.1330.50">
    <property type="entry name" value="2-C-methyl-D-erythritol 2,4-cyclodiphosphate synthase"/>
    <property type="match status" value="1"/>
</dbReference>
<dbReference type="HAMAP" id="MF_00107">
    <property type="entry name" value="IspF"/>
    <property type="match status" value="1"/>
</dbReference>
<dbReference type="InterPro" id="IPR003526">
    <property type="entry name" value="MECDP_synthase"/>
</dbReference>
<dbReference type="InterPro" id="IPR020555">
    <property type="entry name" value="MECDP_synthase_CS"/>
</dbReference>
<dbReference type="InterPro" id="IPR036571">
    <property type="entry name" value="MECDP_synthase_sf"/>
</dbReference>
<dbReference type="NCBIfam" id="TIGR00151">
    <property type="entry name" value="ispF"/>
    <property type="match status" value="1"/>
</dbReference>
<dbReference type="PANTHER" id="PTHR43181">
    <property type="entry name" value="2-C-METHYL-D-ERYTHRITOL 2,4-CYCLODIPHOSPHATE SYNTHASE, CHLOROPLASTIC"/>
    <property type="match status" value="1"/>
</dbReference>
<dbReference type="PANTHER" id="PTHR43181:SF1">
    <property type="entry name" value="2-C-METHYL-D-ERYTHRITOL 2,4-CYCLODIPHOSPHATE SYNTHASE, CHLOROPLASTIC"/>
    <property type="match status" value="1"/>
</dbReference>
<dbReference type="Pfam" id="PF02542">
    <property type="entry name" value="YgbB"/>
    <property type="match status" value="1"/>
</dbReference>
<dbReference type="SUPFAM" id="SSF69765">
    <property type="entry name" value="IpsF-like"/>
    <property type="match status" value="1"/>
</dbReference>
<dbReference type="PROSITE" id="PS01350">
    <property type="entry name" value="ISPF"/>
    <property type="match status" value="1"/>
</dbReference>
<reference key="1">
    <citation type="journal article" date="2007" name="ISME J.">
        <title>Population level functional diversity in a microbial community revealed by comparative genomic and metagenomic analyses.</title>
        <authorList>
            <person name="Bhaya D."/>
            <person name="Grossman A.R."/>
            <person name="Steunou A.-S."/>
            <person name="Khuri N."/>
            <person name="Cohan F.M."/>
            <person name="Hamamura N."/>
            <person name="Melendrez M.C."/>
            <person name="Bateson M.M."/>
            <person name="Ward D.M."/>
            <person name="Heidelberg J.F."/>
        </authorList>
    </citation>
    <scope>NUCLEOTIDE SEQUENCE [LARGE SCALE GENOMIC DNA]</scope>
    <source>
        <strain>JA-2-3B'a(2-13)</strain>
    </source>
</reference>
<accession>Q2JNA9</accession>
<proteinExistence type="inferred from homology"/>
<sequence>MRIGQGYDIHRLVEGRPLILGGIRIPYEKGLLGHSDADVLTHAIMDALLGAAALRDIGYYFPPEDERWKGADSILLLQQVVQLVGQEGWRIANVDSVVVAEQPKLKPHIPAIQARLAEAMQLSPKQVGVKATTNEKLGPVGQGEAMAAFAVVLLLER</sequence>
<name>ISPF_SYNJB</name>
<feature type="chain" id="PRO_0000237756" description="2-C-methyl-D-erythritol 2,4-cyclodiphosphate synthase">
    <location>
        <begin position="1"/>
        <end position="157"/>
    </location>
</feature>
<feature type="binding site" evidence="1">
    <location>
        <begin position="8"/>
        <end position="10"/>
    </location>
    <ligand>
        <name>4-CDP-2-C-methyl-D-erythritol 2-phosphate</name>
        <dbReference type="ChEBI" id="CHEBI:57919"/>
    </ligand>
</feature>
<feature type="binding site" evidence="1">
    <location>
        <position position="8"/>
    </location>
    <ligand>
        <name>a divalent metal cation</name>
        <dbReference type="ChEBI" id="CHEBI:60240"/>
    </ligand>
</feature>
<feature type="binding site" evidence="1">
    <location>
        <position position="10"/>
    </location>
    <ligand>
        <name>a divalent metal cation</name>
        <dbReference type="ChEBI" id="CHEBI:60240"/>
    </ligand>
</feature>
<feature type="binding site" evidence="1">
    <location>
        <begin position="34"/>
        <end position="35"/>
    </location>
    <ligand>
        <name>4-CDP-2-C-methyl-D-erythritol 2-phosphate</name>
        <dbReference type="ChEBI" id="CHEBI:57919"/>
    </ligand>
</feature>
<feature type="binding site" evidence="1">
    <location>
        <position position="42"/>
    </location>
    <ligand>
        <name>a divalent metal cation</name>
        <dbReference type="ChEBI" id="CHEBI:60240"/>
    </ligand>
</feature>
<feature type="binding site" evidence="1">
    <location>
        <begin position="56"/>
        <end position="58"/>
    </location>
    <ligand>
        <name>4-CDP-2-C-methyl-D-erythritol 2-phosphate</name>
        <dbReference type="ChEBI" id="CHEBI:57919"/>
    </ligand>
</feature>
<feature type="binding site" evidence="1">
    <location>
        <begin position="132"/>
        <end position="135"/>
    </location>
    <ligand>
        <name>4-CDP-2-C-methyl-D-erythritol 2-phosphate</name>
        <dbReference type="ChEBI" id="CHEBI:57919"/>
    </ligand>
</feature>
<feature type="site" description="Transition state stabilizer" evidence="1">
    <location>
        <position position="34"/>
    </location>
</feature>
<feature type="site" description="Transition state stabilizer" evidence="1">
    <location>
        <position position="133"/>
    </location>
</feature>
<evidence type="ECO:0000255" key="1">
    <source>
        <dbReference type="HAMAP-Rule" id="MF_00107"/>
    </source>
</evidence>
<organism>
    <name type="scientific">Synechococcus sp. (strain JA-2-3B'a(2-13))</name>
    <name type="common">Cyanobacteria bacterium Yellowstone B-Prime</name>
    <dbReference type="NCBI Taxonomy" id="321332"/>
    <lineage>
        <taxon>Bacteria</taxon>
        <taxon>Bacillati</taxon>
        <taxon>Cyanobacteriota</taxon>
        <taxon>Cyanophyceae</taxon>
        <taxon>Synechococcales</taxon>
        <taxon>Synechococcaceae</taxon>
        <taxon>Synechococcus</taxon>
    </lineage>
</organism>
<gene>
    <name evidence="1" type="primary">ispF</name>
    <name type="ordered locus">CYB_0783</name>
</gene>
<protein>
    <recommendedName>
        <fullName evidence="1">2-C-methyl-D-erythritol 2,4-cyclodiphosphate synthase</fullName>
        <shortName evidence="1">MECDP-synthase</shortName>
        <shortName evidence="1">MECPP-synthase</shortName>
        <shortName evidence="1">MECPS</shortName>
        <ecNumber evidence="1">4.6.1.12</ecNumber>
    </recommendedName>
</protein>